<reference key="1">
    <citation type="journal article" date="2006" name="Proc. Natl. Acad. Sci. U.S.A.">
        <title>Comparative genomics of the lactic acid bacteria.</title>
        <authorList>
            <person name="Makarova K.S."/>
            <person name="Slesarev A."/>
            <person name="Wolf Y.I."/>
            <person name="Sorokin A."/>
            <person name="Mirkin B."/>
            <person name="Koonin E.V."/>
            <person name="Pavlov A."/>
            <person name="Pavlova N."/>
            <person name="Karamychev V."/>
            <person name="Polouchine N."/>
            <person name="Shakhova V."/>
            <person name="Grigoriev I."/>
            <person name="Lou Y."/>
            <person name="Rohksar D."/>
            <person name="Lucas S."/>
            <person name="Huang K."/>
            <person name="Goodstein D.M."/>
            <person name="Hawkins T."/>
            <person name="Plengvidhya V."/>
            <person name="Welker D."/>
            <person name="Hughes J."/>
            <person name="Goh Y."/>
            <person name="Benson A."/>
            <person name="Baldwin K."/>
            <person name="Lee J.-H."/>
            <person name="Diaz-Muniz I."/>
            <person name="Dosti B."/>
            <person name="Smeianov V."/>
            <person name="Wechter W."/>
            <person name="Barabote R."/>
            <person name="Lorca G."/>
            <person name="Altermann E."/>
            <person name="Barrangou R."/>
            <person name="Ganesan B."/>
            <person name="Xie Y."/>
            <person name="Rawsthorne H."/>
            <person name="Tamir D."/>
            <person name="Parker C."/>
            <person name="Breidt F."/>
            <person name="Broadbent J.R."/>
            <person name="Hutkins R."/>
            <person name="O'Sullivan D."/>
            <person name="Steele J."/>
            <person name="Unlu G."/>
            <person name="Saier M.H. Jr."/>
            <person name="Klaenhammer T."/>
            <person name="Richardson P."/>
            <person name="Kozyavkin S."/>
            <person name="Weimer B.C."/>
            <person name="Mills D.A."/>
        </authorList>
    </citation>
    <scope>NUCLEOTIDE SEQUENCE [LARGE SCALE GENOMIC DNA]</scope>
    <source>
        <strain>ATCC 8293 / DSM 20343 / BCRC 11652 / CCM 1803 / JCM 6124 / NCDO 523 / NBRC 100496 / NCIMB 8023 / NCTC 12954 / NRRL B-1118 / 37Y</strain>
    </source>
</reference>
<feature type="chain" id="PRO_1000072279" description="Gamma-glutamyl phosphate reductase">
    <location>
        <begin position="1"/>
        <end position="413"/>
    </location>
</feature>
<evidence type="ECO:0000255" key="1">
    <source>
        <dbReference type="HAMAP-Rule" id="MF_00412"/>
    </source>
</evidence>
<protein>
    <recommendedName>
        <fullName evidence="1">Gamma-glutamyl phosphate reductase</fullName>
        <shortName evidence="1">GPR</shortName>
        <ecNumber evidence="1">1.2.1.41</ecNumber>
    </recommendedName>
    <alternativeName>
        <fullName evidence="1">Glutamate-5-semialdehyde dehydrogenase</fullName>
    </alternativeName>
    <alternativeName>
        <fullName evidence="1">Glutamyl-gamma-semialdehyde dehydrogenase</fullName>
        <shortName evidence="1">GSA dehydrogenase</shortName>
    </alternativeName>
</protein>
<name>PROA_LEUMM</name>
<gene>
    <name evidence="1" type="primary">proA</name>
    <name type="ordered locus">LEUM_0295</name>
</gene>
<keyword id="KW-0028">Amino-acid biosynthesis</keyword>
<keyword id="KW-0963">Cytoplasm</keyword>
<keyword id="KW-0521">NADP</keyword>
<keyword id="KW-0560">Oxidoreductase</keyword>
<keyword id="KW-0641">Proline biosynthesis</keyword>
<keyword id="KW-1185">Reference proteome</keyword>
<comment type="function">
    <text evidence="1">Catalyzes the NADPH-dependent reduction of L-glutamate 5-phosphate into L-glutamate 5-semialdehyde and phosphate. The product spontaneously undergoes cyclization to form 1-pyrroline-5-carboxylate.</text>
</comment>
<comment type="catalytic activity">
    <reaction evidence="1">
        <text>L-glutamate 5-semialdehyde + phosphate + NADP(+) = L-glutamyl 5-phosphate + NADPH + H(+)</text>
        <dbReference type="Rhea" id="RHEA:19541"/>
        <dbReference type="ChEBI" id="CHEBI:15378"/>
        <dbReference type="ChEBI" id="CHEBI:43474"/>
        <dbReference type="ChEBI" id="CHEBI:57783"/>
        <dbReference type="ChEBI" id="CHEBI:58066"/>
        <dbReference type="ChEBI" id="CHEBI:58274"/>
        <dbReference type="ChEBI" id="CHEBI:58349"/>
        <dbReference type="EC" id="1.2.1.41"/>
    </reaction>
</comment>
<comment type="pathway">
    <text evidence="1">Amino-acid biosynthesis; L-proline biosynthesis; L-glutamate 5-semialdehyde from L-glutamate: step 2/2.</text>
</comment>
<comment type="subcellular location">
    <subcellularLocation>
        <location evidence="1">Cytoplasm</location>
    </subcellularLocation>
</comment>
<comment type="similarity">
    <text evidence="1">Belongs to the gamma-glutamyl phosphate reductase family.</text>
</comment>
<sequence length="413" mass="44970">MNAVEEIGKRAKLVTSDVANLAVDIRNQILLDMSSALVANWQEIVAANKKDLDAATQLSGPMRNRLTLDQKTIGGIAASLSAVAKLADPLAGPYDNWKNHTGFKIVKKTVPLGVVAMIFEARPNVTVDAAALTFKSGNAVILRGGKEAIESNIILTNILRNVLRKHNLNPDIIQLITDTTHDSVNTLLNLRDYVDVLIPRGSGQFIDFVVKNATVPVIETGAGNTHIFVDESAKQDEAIRVIHNAKTQKPAVCNAAEKLLIHEAIAGEFLPKIVDDLLAAGVELRGDQKARSIDSRVIGASAEDWDTEYNDLIMAIKIVHNNDEAITWINDHTTHHSETIISEDLNHVTDFMNTVDAAVVYQNVSSRFTDGFEFGFGAEIGISTQKLHARGPMGLSALTTIKYEVFGEGQIRE</sequence>
<proteinExistence type="inferred from homology"/>
<dbReference type="EC" id="1.2.1.41" evidence="1"/>
<dbReference type="EMBL" id="CP000414">
    <property type="protein sequence ID" value="ABJ61421.1"/>
    <property type="molecule type" value="Genomic_DNA"/>
</dbReference>
<dbReference type="RefSeq" id="WP_011679179.1">
    <property type="nucleotide sequence ID" value="NC_008531.1"/>
</dbReference>
<dbReference type="SMR" id="Q03ZF1"/>
<dbReference type="EnsemblBacteria" id="ABJ61421">
    <property type="protein sequence ID" value="ABJ61421"/>
    <property type="gene ID" value="LEUM_0295"/>
</dbReference>
<dbReference type="GeneID" id="29576939"/>
<dbReference type="KEGG" id="lme:LEUM_0295"/>
<dbReference type="eggNOG" id="COG0014">
    <property type="taxonomic scope" value="Bacteria"/>
</dbReference>
<dbReference type="HOGENOM" id="CLU_030231_0_0_9"/>
<dbReference type="UniPathway" id="UPA00098">
    <property type="reaction ID" value="UER00360"/>
</dbReference>
<dbReference type="Proteomes" id="UP000000362">
    <property type="component" value="Chromosome"/>
</dbReference>
<dbReference type="GO" id="GO:0005737">
    <property type="term" value="C:cytoplasm"/>
    <property type="evidence" value="ECO:0007669"/>
    <property type="project" value="UniProtKB-SubCell"/>
</dbReference>
<dbReference type="GO" id="GO:0004350">
    <property type="term" value="F:glutamate-5-semialdehyde dehydrogenase activity"/>
    <property type="evidence" value="ECO:0007669"/>
    <property type="project" value="UniProtKB-UniRule"/>
</dbReference>
<dbReference type="GO" id="GO:0050661">
    <property type="term" value="F:NADP binding"/>
    <property type="evidence" value="ECO:0007669"/>
    <property type="project" value="InterPro"/>
</dbReference>
<dbReference type="GO" id="GO:0055129">
    <property type="term" value="P:L-proline biosynthetic process"/>
    <property type="evidence" value="ECO:0007669"/>
    <property type="project" value="UniProtKB-UniRule"/>
</dbReference>
<dbReference type="CDD" id="cd07079">
    <property type="entry name" value="ALDH_F18-19_ProA-GPR"/>
    <property type="match status" value="1"/>
</dbReference>
<dbReference type="FunFam" id="3.40.309.10:FF:000006">
    <property type="entry name" value="Gamma-glutamyl phosphate reductase"/>
    <property type="match status" value="1"/>
</dbReference>
<dbReference type="Gene3D" id="3.40.605.10">
    <property type="entry name" value="Aldehyde Dehydrogenase, Chain A, domain 1"/>
    <property type="match status" value="1"/>
</dbReference>
<dbReference type="Gene3D" id="3.40.309.10">
    <property type="entry name" value="Aldehyde Dehydrogenase, Chain A, domain 2"/>
    <property type="match status" value="1"/>
</dbReference>
<dbReference type="HAMAP" id="MF_00412">
    <property type="entry name" value="ProA"/>
    <property type="match status" value="1"/>
</dbReference>
<dbReference type="InterPro" id="IPR016161">
    <property type="entry name" value="Ald_DH/histidinol_DH"/>
</dbReference>
<dbReference type="InterPro" id="IPR016163">
    <property type="entry name" value="Ald_DH_C"/>
</dbReference>
<dbReference type="InterPro" id="IPR016162">
    <property type="entry name" value="Ald_DH_N"/>
</dbReference>
<dbReference type="InterPro" id="IPR015590">
    <property type="entry name" value="Aldehyde_DH_dom"/>
</dbReference>
<dbReference type="InterPro" id="IPR020593">
    <property type="entry name" value="G-glutamylP_reductase_CS"/>
</dbReference>
<dbReference type="InterPro" id="IPR012134">
    <property type="entry name" value="Glu-5-SA_DH"/>
</dbReference>
<dbReference type="InterPro" id="IPR000965">
    <property type="entry name" value="GPR_dom"/>
</dbReference>
<dbReference type="NCBIfam" id="NF001221">
    <property type="entry name" value="PRK00197.1"/>
    <property type="match status" value="1"/>
</dbReference>
<dbReference type="NCBIfam" id="TIGR00407">
    <property type="entry name" value="proA"/>
    <property type="match status" value="1"/>
</dbReference>
<dbReference type="PANTHER" id="PTHR11063:SF8">
    <property type="entry name" value="DELTA-1-PYRROLINE-5-CARBOXYLATE SYNTHASE"/>
    <property type="match status" value="1"/>
</dbReference>
<dbReference type="PANTHER" id="PTHR11063">
    <property type="entry name" value="GLUTAMATE SEMIALDEHYDE DEHYDROGENASE"/>
    <property type="match status" value="1"/>
</dbReference>
<dbReference type="Pfam" id="PF00171">
    <property type="entry name" value="Aldedh"/>
    <property type="match status" value="1"/>
</dbReference>
<dbReference type="PIRSF" id="PIRSF000151">
    <property type="entry name" value="GPR"/>
    <property type="match status" value="1"/>
</dbReference>
<dbReference type="SUPFAM" id="SSF53720">
    <property type="entry name" value="ALDH-like"/>
    <property type="match status" value="1"/>
</dbReference>
<dbReference type="PROSITE" id="PS01223">
    <property type="entry name" value="PROA"/>
    <property type="match status" value="1"/>
</dbReference>
<organism>
    <name type="scientific">Leuconostoc mesenteroides subsp. mesenteroides (strain ATCC 8293 / DSM 20343 / BCRC 11652 / CCM 1803 / JCM 6124 / NCDO 523 / NBRC 100496 / NCIMB 8023 / NCTC 12954 / NRRL B-1118 / 37Y)</name>
    <dbReference type="NCBI Taxonomy" id="203120"/>
    <lineage>
        <taxon>Bacteria</taxon>
        <taxon>Bacillati</taxon>
        <taxon>Bacillota</taxon>
        <taxon>Bacilli</taxon>
        <taxon>Lactobacillales</taxon>
        <taxon>Lactobacillaceae</taxon>
        <taxon>Leuconostoc</taxon>
    </lineage>
</organism>
<accession>Q03ZF1</accession>